<reference key="1">
    <citation type="journal article" date="1997" name="Nature">
        <title>Genomic sequence of a Lyme disease spirochaete, Borrelia burgdorferi.</title>
        <authorList>
            <person name="Fraser C.M."/>
            <person name="Casjens S."/>
            <person name="Huang W.M."/>
            <person name="Sutton G.G."/>
            <person name="Clayton R.A."/>
            <person name="Lathigra R."/>
            <person name="White O."/>
            <person name="Ketchum K.A."/>
            <person name="Dodson R.J."/>
            <person name="Hickey E.K."/>
            <person name="Gwinn M.L."/>
            <person name="Dougherty B.A."/>
            <person name="Tomb J.-F."/>
            <person name="Fleischmann R.D."/>
            <person name="Richardson D.L."/>
            <person name="Peterson J.D."/>
            <person name="Kerlavage A.R."/>
            <person name="Quackenbush J."/>
            <person name="Salzberg S.L."/>
            <person name="Hanson M."/>
            <person name="van Vugt R."/>
            <person name="Palmer N."/>
            <person name="Adams M.D."/>
            <person name="Gocayne J.D."/>
            <person name="Weidman J.F."/>
            <person name="Utterback T.R."/>
            <person name="Watthey L."/>
            <person name="McDonald L.A."/>
            <person name="Artiach P."/>
            <person name="Bowman C."/>
            <person name="Garland S.A."/>
            <person name="Fujii C."/>
            <person name="Cotton M.D."/>
            <person name="Horst K."/>
            <person name="Roberts K.M."/>
            <person name="Hatch B."/>
            <person name="Smith H.O."/>
            <person name="Venter J.C."/>
        </authorList>
    </citation>
    <scope>NUCLEOTIDE SEQUENCE [LARGE SCALE GENOMIC DNA]</scope>
    <source>
        <strain>ATCC 35210 / DSM 4680 / CIP 102532 / B31</strain>
    </source>
</reference>
<keyword id="KW-0002">3D-structure</keyword>
<keyword id="KW-1185">Reference proteome</keyword>
<keyword id="KW-0687">Ribonucleoprotein</keyword>
<keyword id="KW-0689">Ribosomal protein</keyword>
<keyword id="KW-0694">RNA-binding</keyword>
<keyword id="KW-0699">rRNA-binding</keyword>
<dbReference type="EMBL" id="AE000783">
    <property type="protein sequence ID" value="AAC66847.1"/>
    <property type="molecule type" value="Genomic_DNA"/>
</dbReference>
<dbReference type="PIR" id="F70161">
    <property type="entry name" value="F70161"/>
</dbReference>
<dbReference type="RefSeq" id="NP_212629.1">
    <property type="nucleotide sequence ID" value="NC_001318.1"/>
</dbReference>
<dbReference type="RefSeq" id="WP_002657973.1">
    <property type="nucleotide sequence ID" value="NC_001318.1"/>
</dbReference>
<dbReference type="PDB" id="8FMW">
    <property type="method" value="EM"/>
    <property type="resolution" value="2.86 A"/>
    <property type="chains" value="E=8-165"/>
</dbReference>
<dbReference type="PDBsum" id="8FMW"/>
<dbReference type="EMDB" id="EMD-29298"/>
<dbReference type="SMR" id="O51448"/>
<dbReference type="STRING" id="224326.BB_0495"/>
<dbReference type="PaxDb" id="224326-BB_0495"/>
<dbReference type="EnsemblBacteria" id="AAC66847">
    <property type="protein sequence ID" value="AAC66847"/>
    <property type="gene ID" value="BB_0495"/>
</dbReference>
<dbReference type="GeneID" id="56567930"/>
<dbReference type="KEGG" id="bbu:BB_0495"/>
<dbReference type="PATRIC" id="fig|224326.49.peg.886"/>
<dbReference type="HOGENOM" id="CLU_065898_2_2_12"/>
<dbReference type="OrthoDB" id="9809045at2"/>
<dbReference type="Proteomes" id="UP000001807">
    <property type="component" value="Chromosome"/>
</dbReference>
<dbReference type="GO" id="GO:0015935">
    <property type="term" value="C:small ribosomal subunit"/>
    <property type="evidence" value="ECO:0007669"/>
    <property type="project" value="InterPro"/>
</dbReference>
<dbReference type="GO" id="GO:0019843">
    <property type="term" value="F:rRNA binding"/>
    <property type="evidence" value="ECO:0007669"/>
    <property type="project" value="UniProtKB-UniRule"/>
</dbReference>
<dbReference type="GO" id="GO:0003735">
    <property type="term" value="F:structural constituent of ribosome"/>
    <property type="evidence" value="ECO:0007669"/>
    <property type="project" value="InterPro"/>
</dbReference>
<dbReference type="GO" id="GO:0006412">
    <property type="term" value="P:translation"/>
    <property type="evidence" value="ECO:0007669"/>
    <property type="project" value="UniProtKB-UniRule"/>
</dbReference>
<dbReference type="FunFam" id="3.30.160.20:FF:000001">
    <property type="entry name" value="30S ribosomal protein S5"/>
    <property type="match status" value="1"/>
</dbReference>
<dbReference type="FunFam" id="3.30.230.10:FF:000002">
    <property type="entry name" value="30S ribosomal protein S5"/>
    <property type="match status" value="1"/>
</dbReference>
<dbReference type="Gene3D" id="3.30.160.20">
    <property type="match status" value="1"/>
</dbReference>
<dbReference type="Gene3D" id="3.30.230.10">
    <property type="match status" value="1"/>
</dbReference>
<dbReference type="HAMAP" id="MF_01307_B">
    <property type="entry name" value="Ribosomal_uS5_B"/>
    <property type="match status" value="1"/>
</dbReference>
<dbReference type="InterPro" id="IPR020568">
    <property type="entry name" value="Ribosomal_Su5_D2-typ_SF"/>
</dbReference>
<dbReference type="InterPro" id="IPR000851">
    <property type="entry name" value="Ribosomal_uS5"/>
</dbReference>
<dbReference type="InterPro" id="IPR005712">
    <property type="entry name" value="Ribosomal_uS5_bac-type"/>
</dbReference>
<dbReference type="InterPro" id="IPR005324">
    <property type="entry name" value="Ribosomal_uS5_C"/>
</dbReference>
<dbReference type="InterPro" id="IPR013810">
    <property type="entry name" value="Ribosomal_uS5_N"/>
</dbReference>
<dbReference type="InterPro" id="IPR018192">
    <property type="entry name" value="Ribosomal_uS5_N_CS"/>
</dbReference>
<dbReference type="InterPro" id="IPR014721">
    <property type="entry name" value="Ribsml_uS5_D2-typ_fold_subgr"/>
</dbReference>
<dbReference type="NCBIfam" id="TIGR01021">
    <property type="entry name" value="rpsE_bact"/>
    <property type="match status" value="1"/>
</dbReference>
<dbReference type="PANTHER" id="PTHR48277">
    <property type="entry name" value="MITOCHONDRIAL RIBOSOMAL PROTEIN S5"/>
    <property type="match status" value="1"/>
</dbReference>
<dbReference type="PANTHER" id="PTHR48277:SF1">
    <property type="entry name" value="MITOCHONDRIAL RIBOSOMAL PROTEIN S5"/>
    <property type="match status" value="1"/>
</dbReference>
<dbReference type="Pfam" id="PF00333">
    <property type="entry name" value="Ribosomal_S5"/>
    <property type="match status" value="1"/>
</dbReference>
<dbReference type="Pfam" id="PF03719">
    <property type="entry name" value="Ribosomal_S5_C"/>
    <property type="match status" value="1"/>
</dbReference>
<dbReference type="SUPFAM" id="SSF54768">
    <property type="entry name" value="dsRNA-binding domain-like"/>
    <property type="match status" value="1"/>
</dbReference>
<dbReference type="SUPFAM" id="SSF54211">
    <property type="entry name" value="Ribosomal protein S5 domain 2-like"/>
    <property type="match status" value="1"/>
</dbReference>
<dbReference type="PROSITE" id="PS00585">
    <property type="entry name" value="RIBOSOMAL_S5"/>
    <property type="match status" value="1"/>
</dbReference>
<dbReference type="PROSITE" id="PS50881">
    <property type="entry name" value="S5_DSRBD"/>
    <property type="match status" value="1"/>
</dbReference>
<sequence length="165" mass="17779">MVDVHAQRKQIEKLISLNRVTKVVKGGRRFSFAAFMVVGDGEGHVGWGFGKANDASDAIKKSLTSARKNLRFVPIRKGTLPHEVIGCFKKAKVLIKPATHGTGVIAGGPVRAVMEALGVHDILSKSLGSNNSMNVVKATFKAFDLVLNAEKVAEMRGKTLKTLWG</sequence>
<accession>O51448</accession>
<evidence type="ECO:0000255" key="1">
    <source>
        <dbReference type="HAMAP-Rule" id="MF_01307"/>
    </source>
</evidence>
<evidence type="ECO:0000305" key="2"/>
<feature type="chain" id="PRO_0000131477" description="Small ribosomal subunit protein uS5">
    <location>
        <begin position="1"/>
        <end position="165"/>
    </location>
</feature>
<feature type="domain" description="S5 DRBM" evidence="1">
    <location>
        <begin position="10"/>
        <end position="73"/>
    </location>
</feature>
<organism>
    <name type="scientific">Borreliella burgdorferi (strain ATCC 35210 / DSM 4680 / CIP 102532 / B31)</name>
    <name type="common">Borrelia burgdorferi</name>
    <dbReference type="NCBI Taxonomy" id="224326"/>
    <lineage>
        <taxon>Bacteria</taxon>
        <taxon>Pseudomonadati</taxon>
        <taxon>Spirochaetota</taxon>
        <taxon>Spirochaetia</taxon>
        <taxon>Spirochaetales</taxon>
        <taxon>Borreliaceae</taxon>
        <taxon>Borreliella</taxon>
    </lineage>
</organism>
<name>RS5_BORBU</name>
<gene>
    <name evidence="1" type="primary">rpsE</name>
    <name type="ordered locus">BB_0495</name>
</gene>
<comment type="function">
    <text evidence="1">With S4 and S12 plays an important role in translational accuracy.</text>
</comment>
<comment type="function">
    <text evidence="1">Located at the back of the 30S subunit body where it stabilizes the conformation of the head with respect to the body.</text>
</comment>
<comment type="subunit">
    <text evidence="1">Part of the 30S ribosomal subunit. Contacts proteins S4 and S8.</text>
</comment>
<comment type="domain">
    <text>The N-terminal domain interacts with the head of the 30S subunit; the C-terminal domain interacts with the body and contacts protein S4. The interaction surface between S4 and S5 is involved in control of translational fidelity.</text>
</comment>
<comment type="similarity">
    <text evidence="1">Belongs to the universal ribosomal protein uS5 family.</text>
</comment>
<proteinExistence type="evidence at protein level"/>
<protein>
    <recommendedName>
        <fullName evidence="1">Small ribosomal subunit protein uS5</fullName>
    </recommendedName>
    <alternativeName>
        <fullName evidence="2">30S ribosomal protein S5</fullName>
    </alternativeName>
</protein>